<evidence type="ECO:0000255" key="1">
    <source>
        <dbReference type="HAMAP-Rule" id="MF_01013"/>
    </source>
</evidence>
<comment type="function">
    <text evidence="1">IGPS catalyzes the conversion of PRFAR and glutamine to IGP, AICAR and glutamate. The HisF subunit catalyzes the cyclization activity that produces IGP and AICAR from PRFAR using the ammonia provided by the HisH subunit.</text>
</comment>
<comment type="catalytic activity">
    <reaction evidence="1">
        <text>5-[(5-phospho-1-deoxy-D-ribulos-1-ylimino)methylamino]-1-(5-phospho-beta-D-ribosyl)imidazole-4-carboxamide + L-glutamine = D-erythro-1-(imidazol-4-yl)glycerol 3-phosphate + 5-amino-1-(5-phospho-beta-D-ribosyl)imidazole-4-carboxamide + L-glutamate + H(+)</text>
        <dbReference type="Rhea" id="RHEA:24793"/>
        <dbReference type="ChEBI" id="CHEBI:15378"/>
        <dbReference type="ChEBI" id="CHEBI:29985"/>
        <dbReference type="ChEBI" id="CHEBI:58278"/>
        <dbReference type="ChEBI" id="CHEBI:58359"/>
        <dbReference type="ChEBI" id="CHEBI:58475"/>
        <dbReference type="ChEBI" id="CHEBI:58525"/>
        <dbReference type="EC" id="4.3.2.10"/>
    </reaction>
</comment>
<comment type="pathway">
    <text evidence="1">Amino-acid biosynthesis; L-histidine biosynthesis; L-histidine from 5-phospho-alpha-D-ribose 1-diphosphate: step 5/9.</text>
</comment>
<comment type="subunit">
    <text evidence="1">Heterodimer of HisH and HisF.</text>
</comment>
<comment type="subcellular location">
    <subcellularLocation>
        <location evidence="1">Cytoplasm</location>
    </subcellularLocation>
</comment>
<comment type="similarity">
    <text evidence="1">Belongs to the HisA/HisF family.</text>
</comment>
<accession>A5FQI9</accession>
<gene>
    <name evidence="1" type="primary">hisF</name>
    <name type="ordered locus">DehaBAV1_0958</name>
</gene>
<proteinExistence type="inferred from homology"/>
<sequence length="253" mass="27264">MLNKRVIPCLDVNNGRVVKGTSFVNLRDAGDPVELAARYYREGADELVFLDISATTEERKTMAEVVEKVSKEVFIPLCVGGGLRSIADMTTLLRAGADKVSVNSAAVSDPDLISRGAEKFGRQCIVVAIDAKREGNSWQVYTHSGKKPTGLDAVEWAMKAEQLGAGEILLTSIDADGKNTGYDNELNREVSSRLNIPVIASGGAGSPEDLYNALDKGQADAVLAASIFHYGRYSIAEVKKYLKSKGLPVRLEN</sequence>
<reference key="1">
    <citation type="submission" date="2007-05" db="EMBL/GenBank/DDBJ databases">
        <title>Complete sequence of Dehalococcoides sp. BAV1.</title>
        <authorList>
            <consortium name="US DOE Joint Genome Institute"/>
            <person name="Copeland A."/>
            <person name="Lucas S."/>
            <person name="Lapidus A."/>
            <person name="Barry K."/>
            <person name="Detter J.C."/>
            <person name="Glavina del Rio T."/>
            <person name="Hammon N."/>
            <person name="Israni S."/>
            <person name="Pitluck S."/>
            <person name="Lowry S."/>
            <person name="Clum A."/>
            <person name="Schmutz J."/>
            <person name="Larimer F."/>
            <person name="Land M."/>
            <person name="Hauser L."/>
            <person name="Kyrpides N."/>
            <person name="Kim E."/>
            <person name="Ritalahti K.M."/>
            <person name="Loeffler F."/>
            <person name="Richardson P."/>
        </authorList>
    </citation>
    <scope>NUCLEOTIDE SEQUENCE [LARGE SCALE GENOMIC DNA]</scope>
    <source>
        <strain>ATCC BAA-2100 / JCM 16839 / KCTC 5957 / BAV1</strain>
    </source>
</reference>
<protein>
    <recommendedName>
        <fullName evidence="1">Imidazole glycerol phosphate synthase subunit HisF</fullName>
        <ecNumber evidence="1">4.3.2.10</ecNumber>
    </recommendedName>
    <alternativeName>
        <fullName evidence="1">IGP synthase cyclase subunit</fullName>
    </alternativeName>
    <alternativeName>
        <fullName evidence="1">IGP synthase subunit HisF</fullName>
    </alternativeName>
    <alternativeName>
        <fullName evidence="1">ImGP synthase subunit HisF</fullName>
        <shortName evidence="1">IGPS subunit HisF</shortName>
    </alternativeName>
</protein>
<name>HIS6_DEHMB</name>
<keyword id="KW-0028">Amino-acid biosynthesis</keyword>
<keyword id="KW-0963">Cytoplasm</keyword>
<keyword id="KW-0368">Histidine biosynthesis</keyword>
<keyword id="KW-0456">Lyase</keyword>
<organism>
    <name type="scientific">Dehalococcoides mccartyi (strain ATCC BAA-2100 / JCM 16839 / KCTC 5957 / BAV1)</name>
    <dbReference type="NCBI Taxonomy" id="216389"/>
    <lineage>
        <taxon>Bacteria</taxon>
        <taxon>Bacillati</taxon>
        <taxon>Chloroflexota</taxon>
        <taxon>Dehalococcoidia</taxon>
        <taxon>Dehalococcoidales</taxon>
        <taxon>Dehalococcoidaceae</taxon>
        <taxon>Dehalococcoides</taxon>
    </lineage>
</organism>
<feature type="chain" id="PRO_1000084056" description="Imidazole glycerol phosphate synthase subunit HisF">
    <location>
        <begin position="1"/>
        <end position="253"/>
    </location>
</feature>
<feature type="active site" evidence="1">
    <location>
        <position position="11"/>
    </location>
</feature>
<feature type="active site" evidence="1">
    <location>
        <position position="130"/>
    </location>
</feature>
<dbReference type="EC" id="4.3.2.10" evidence="1"/>
<dbReference type="EMBL" id="CP000688">
    <property type="protein sequence ID" value="ABQ17538.1"/>
    <property type="molecule type" value="Genomic_DNA"/>
</dbReference>
<dbReference type="SMR" id="A5FQI9"/>
<dbReference type="KEGG" id="deb:DehaBAV1_0958"/>
<dbReference type="PATRIC" id="fig|216389.18.peg.1012"/>
<dbReference type="HOGENOM" id="CLU_048577_4_0_0"/>
<dbReference type="UniPathway" id="UPA00031">
    <property type="reaction ID" value="UER00010"/>
</dbReference>
<dbReference type="GO" id="GO:0005737">
    <property type="term" value="C:cytoplasm"/>
    <property type="evidence" value="ECO:0007669"/>
    <property type="project" value="UniProtKB-SubCell"/>
</dbReference>
<dbReference type="GO" id="GO:0000107">
    <property type="term" value="F:imidazoleglycerol-phosphate synthase activity"/>
    <property type="evidence" value="ECO:0007669"/>
    <property type="project" value="UniProtKB-UniRule"/>
</dbReference>
<dbReference type="GO" id="GO:0016829">
    <property type="term" value="F:lyase activity"/>
    <property type="evidence" value="ECO:0007669"/>
    <property type="project" value="UniProtKB-KW"/>
</dbReference>
<dbReference type="GO" id="GO:0000105">
    <property type="term" value="P:L-histidine biosynthetic process"/>
    <property type="evidence" value="ECO:0007669"/>
    <property type="project" value="UniProtKB-UniRule"/>
</dbReference>
<dbReference type="CDD" id="cd04731">
    <property type="entry name" value="HisF"/>
    <property type="match status" value="1"/>
</dbReference>
<dbReference type="FunFam" id="3.20.20.70:FF:000006">
    <property type="entry name" value="Imidazole glycerol phosphate synthase subunit HisF"/>
    <property type="match status" value="1"/>
</dbReference>
<dbReference type="Gene3D" id="3.20.20.70">
    <property type="entry name" value="Aldolase class I"/>
    <property type="match status" value="1"/>
</dbReference>
<dbReference type="HAMAP" id="MF_01013">
    <property type="entry name" value="HisF"/>
    <property type="match status" value="1"/>
</dbReference>
<dbReference type="InterPro" id="IPR013785">
    <property type="entry name" value="Aldolase_TIM"/>
</dbReference>
<dbReference type="InterPro" id="IPR006062">
    <property type="entry name" value="His_biosynth"/>
</dbReference>
<dbReference type="InterPro" id="IPR004651">
    <property type="entry name" value="HisF"/>
</dbReference>
<dbReference type="InterPro" id="IPR050064">
    <property type="entry name" value="IGPS_HisA/HisF"/>
</dbReference>
<dbReference type="InterPro" id="IPR011060">
    <property type="entry name" value="RibuloseP-bd_barrel"/>
</dbReference>
<dbReference type="NCBIfam" id="TIGR00735">
    <property type="entry name" value="hisF"/>
    <property type="match status" value="1"/>
</dbReference>
<dbReference type="PANTHER" id="PTHR21235:SF2">
    <property type="entry name" value="IMIDAZOLE GLYCEROL PHOSPHATE SYNTHASE HISHF"/>
    <property type="match status" value="1"/>
</dbReference>
<dbReference type="PANTHER" id="PTHR21235">
    <property type="entry name" value="IMIDAZOLE GLYCEROL PHOSPHATE SYNTHASE SUBUNIT HISF/H IGP SYNTHASE SUBUNIT HISF/H"/>
    <property type="match status" value="1"/>
</dbReference>
<dbReference type="Pfam" id="PF00977">
    <property type="entry name" value="His_biosynth"/>
    <property type="match status" value="1"/>
</dbReference>
<dbReference type="SUPFAM" id="SSF51366">
    <property type="entry name" value="Ribulose-phoshate binding barrel"/>
    <property type="match status" value="1"/>
</dbReference>